<gene>
    <name evidence="1" type="primary">glmU</name>
    <name type="ordered locus">PTH_0104</name>
</gene>
<sequence>MDLAAVILAAGRGTRMKSKLPKVLHRVCGRPMLSYIVNAVAAAGIKKIVVVAGYGAEQVAREVEGLAQVALQAEQLGTAHALLQAGPFLSGFAGKVLVLCGDTPLIEAGTLAKLAGFHRTAGAAATLLTAEPDDPAGYGRVIRDGRGNVIKIVEEKDASPAEKLIREINTGIYCFEAAGLFDALKGIRPANAQGEYYLTDIVEIYVRAGLAVAAFKLENPVEVTGINDRRQLAEVEKYLRRRVLEDLMQSGVTVLDPASTFVDGTVRVGRDTVIYPFTFLEGSTIIGEDCVIGPGSRLVNAVVGNGVSVQNSVVIESQIGDCCSIGPFAYLRPETRLGRNVKVGDFVEIKKSVIGDGSKVPHLSYVGDATVGAGVNIGCGTITCNYDGRNKWPTRIGDGAFIGSNTNLVAPVEIGAGAVTGAGSTITKNVPDGALAVERARQVLVPDWAAKKRDKKV</sequence>
<comment type="function">
    <text evidence="1">Catalyzes the last two sequential reactions in the de novo biosynthetic pathway for UDP-N-acetylglucosamine (UDP-GlcNAc). The C-terminal domain catalyzes the transfer of acetyl group from acetyl coenzyme A to glucosamine-1-phosphate (GlcN-1-P) to produce N-acetylglucosamine-1-phosphate (GlcNAc-1-P), which is converted into UDP-GlcNAc by the transfer of uridine 5-monophosphate (from uridine 5-triphosphate), a reaction catalyzed by the N-terminal domain.</text>
</comment>
<comment type="catalytic activity">
    <reaction evidence="1">
        <text>alpha-D-glucosamine 1-phosphate + acetyl-CoA = N-acetyl-alpha-D-glucosamine 1-phosphate + CoA + H(+)</text>
        <dbReference type="Rhea" id="RHEA:13725"/>
        <dbReference type="ChEBI" id="CHEBI:15378"/>
        <dbReference type="ChEBI" id="CHEBI:57287"/>
        <dbReference type="ChEBI" id="CHEBI:57288"/>
        <dbReference type="ChEBI" id="CHEBI:57776"/>
        <dbReference type="ChEBI" id="CHEBI:58516"/>
        <dbReference type="EC" id="2.3.1.157"/>
    </reaction>
</comment>
<comment type="catalytic activity">
    <reaction evidence="1">
        <text>N-acetyl-alpha-D-glucosamine 1-phosphate + UTP + H(+) = UDP-N-acetyl-alpha-D-glucosamine + diphosphate</text>
        <dbReference type="Rhea" id="RHEA:13509"/>
        <dbReference type="ChEBI" id="CHEBI:15378"/>
        <dbReference type="ChEBI" id="CHEBI:33019"/>
        <dbReference type="ChEBI" id="CHEBI:46398"/>
        <dbReference type="ChEBI" id="CHEBI:57705"/>
        <dbReference type="ChEBI" id="CHEBI:57776"/>
        <dbReference type="EC" id="2.7.7.23"/>
    </reaction>
</comment>
<comment type="cofactor">
    <cofactor evidence="1">
        <name>Mg(2+)</name>
        <dbReference type="ChEBI" id="CHEBI:18420"/>
    </cofactor>
    <text evidence="1">Binds 1 Mg(2+) ion per subunit.</text>
</comment>
<comment type="pathway">
    <text evidence="1">Nucleotide-sugar biosynthesis; UDP-N-acetyl-alpha-D-glucosamine biosynthesis; N-acetyl-alpha-D-glucosamine 1-phosphate from alpha-D-glucosamine 6-phosphate (route II): step 2/2.</text>
</comment>
<comment type="pathway">
    <text evidence="1">Nucleotide-sugar biosynthesis; UDP-N-acetyl-alpha-D-glucosamine biosynthesis; UDP-N-acetyl-alpha-D-glucosamine from N-acetyl-alpha-D-glucosamine 1-phosphate: step 1/1.</text>
</comment>
<comment type="pathway">
    <text evidence="1">Bacterial outer membrane biogenesis; LPS lipid A biosynthesis.</text>
</comment>
<comment type="subunit">
    <text evidence="1">Homotrimer.</text>
</comment>
<comment type="subcellular location">
    <subcellularLocation>
        <location evidence="1">Cytoplasm</location>
    </subcellularLocation>
</comment>
<comment type="similarity">
    <text evidence="1">In the N-terminal section; belongs to the N-acetylglucosamine-1-phosphate uridyltransferase family.</text>
</comment>
<comment type="similarity">
    <text evidence="1">In the C-terminal section; belongs to the transferase hexapeptide repeat family.</text>
</comment>
<protein>
    <recommendedName>
        <fullName evidence="1">Bifunctional protein GlmU</fullName>
    </recommendedName>
    <domain>
        <recommendedName>
            <fullName evidence="1">UDP-N-acetylglucosamine pyrophosphorylase</fullName>
            <ecNumber evidence="1">2.7.7.23</ecNumber>
        </recommendedName>
        <alternativeName>
            <fullName evidence="1">N-acetylglucosamine-1-phosphate uridyltransferase</fullName>
        </alternativeName>
    </domain>
    <domain>
        <recommendedName>
            <fullName evidence="1">Glucosamine-1-phosphate N-acetyltransferase</fullName>
            <ecNumber evidence="1">2.3.1.157</ecNumber>
        </recommendedName>
    </domain>
</protein>
<evidence type="ECO:0000255" key="1">
    <source>
        <dbReference type="HAMAP-Rule" id="MF_01631"/>
    </source>
</evidence>
<keyword id="KW-0012">Acyltransferase</keyword>
<keyword id="KW-0133">Cell shape</keyword>
<keyword id="KW-0961">Cell wall biogenesis/degradation</keyword>
<keyword id="KW-0963">Cytoplasm</keyword>
<keyword id="KW-0460">Magnesium</keyword>
<keyword id="KW-0479">Metal-binding</keyword>
<keyword id="KW-0511">Multifunctional enzyme</keyword>
<keyword id="KW-0548">Nucleotidyltransferase</keyword>
<keyword id="KW-0573">Peptidoglycan synthesis</keyword>
<keyword id="KW-1185">Reference proteome</keyword>
<keyword id="KW-0677">Repeat</keyword>
<keyword id="KW-0808">Transferase</keyword>
<feature type="chain" id="PRO_0000337737" description="Bifunctional protein GlmU">
    <location>
        <begin position="1"/>
        <end position="457"/>
    </location>
</feature>
<feature type="region of interest" description="Pyrophosphorylase" evidence="1">
    <location>
        <begin position="1"/>
        <end position="229"/>
    </location>
</feature>
<feature type="region of interest" description="Linker" evidence="1">
    <location>
        <begin position="230"/>
        <end position="250"/>
    </location>
</feature>
<feature type="region of interest" description="N-acetyltransferase" evidence="1">
    <location>
        <begin position="251"/>
        <end position="457"/>
    </location>
</feature>
<feature type="active site" description="Proton acceptor" evidence="1">
    <location>
        <position position="362"/>
    </location>
</feature>
<feature type="binding site" evidence="1">
    <location>
        <begin position="8"/>
        <end position="11"/>
    </location>
    <ligand>
        <name>UDP-N-acetyl-alpha-D-glucosamine</name>
        <dbReference type="ChEBI" id="CHEBI:57705"/>
    </ligand>
</feature>
<feature type="binding site" evidence="1">
    <location>
        <position position="22"/>
    </location>
    <ligand>
        <name>UDP-N-acetyl-alpha-D-glucosamine</name>
        <dbReference type="ChEBI" id="CHEBI:57705"/>
    </ligand>
</feature>
<feature type="binding site" evidence="1">
    <location>
        <position position="72"/>
    </location>
    <ligand>
        <name>UDP-N-acetyl-alpha-D-glucosamine</name>
        <dbReference type="ChEBI" id="CHEBI:57705"/>
    </ligand>
</feature>
<feature type="binding site" evidence="1">
    <location>
        <begin position="77"/>
        <end position="78"/>
    </location>
    <ligand>
        <name>UDP-N-acetyl-alpha-D-glucosamine</name>
        <dbReference type="ChEBI" id="CHEBI:57705"/>
    </ligand>
</feature>
<feature type="binding site" evidence="1">
    <location>
        <position position="102"/>
    </location>
    <ligand>
        <name>Mg(2+)</name>
        <dbReference type="ChEBI" id="CHEBI:18420"/>
    </ligand>
</feature>
<feature type="binding site" evidence="1">
    <location>
        <position position="139"/>
    </location>
    <ligand>
        <name>UDP-N-acetyl-alpha-D-glucosamine</name>
        <dbReference type="ChEBI" id="CHEBI:57705"/>
    </ligand>
</feature>
<feature type="binding site" evidence="1">
    <location>
        <position position="154"/>
    </location>
    <ligand>
        <name>UDP-N-acetyl-alpha-D-glucosamine</name>
        <dbReference type="ChEBI" id="CHEBI:57705"/>
    </ligand>
</feature>
<feature type="binding site" evidence="1">
    <location>
        <position position="169"/>
    </location>
    <ligand>
        <name>UDP-N-acetyl-alpha-D-glucosamine</name>
        <dbReference type="ChEBI" id="CHEBI:57705"/>
    </ligand>
</feature>
<feature type="binding site" evidence="1">
    <location>
        <position position="227"/>
    </location>
    <ligand>
        <name>Mg(2+)</name>
        <dbReference type="ChEBI" id="CHEBI:18420"/>
    </ligand>
</feature>
<feature type="binding site" evidence="1">
    <location>
        <position position="227"/>
    </location>
    <ligand>
        <name>UDP-N-acetyl-alpha-D-glucosamine</name>
        <dbReference type="ChEBI" id="CHEBI:57705"/>
    </ligand>
</feature>
<feature type="binding site" evidence="1">
    <location>
        <position position="332"/>
    </location>
    <ligand>
        <name>UDP-N-acetyl-alpha-D-glucosamine</name>
        <dbReference type="ChEBI" id="CHEBI:57705"/>
    </ligand>
</feature>
<feature type="binding site" evidence="1">
    <location>
        <position position="350"/>
    </location>
    <ligand>
        <name>UDP-N-acetyl-alpha-D-glucosamine</name>
        <dbReference type="ChEBI" id="CHEBI:57705"/>
    </ligand>
</feature>
<feature type="binding site" evidence="1">
    <location>
        <position position="365"/>
    </location>
    <ligand>
        <name>UDP-N-acetyl-alpha-D-glucosamine</name>
        <dbReference type="ChEBI" id="CHEBI:57705"/>
    </ligand>
</feature>
<feature type="binding site" evidence="1">
    <location>
        <position position="376"/>
    </location>
    <ligand>
        <name>UDP-N-acetyl-alpha-D-glucosamine</name>
        <dbReference type="ChEBI" id="CHEBI:57705"/>
    </ligand>
</feature>
<feature type="binding site" evidence="1">
    <location>
        <begin position="385"/>
        <end position="386"/>
    </location>
    <ligand>
        <name>acetyl-CoA</name>
        <dbReference type="ChEBI" id="CHEBI:57288"/>
    </ligand>
</feature>
<feature type="binding site" evidence="1">
    <location>
        <position position="404"/>
    </location>
    <ligand>
        <name>acetyl-CoA</name>
        <dbReference type="ChEBI" id="CHEBI:57288"/>
    </ligand>
</feature>
<feature type="binding site" evidence="1">
    <location>
        <position position="422"/>
    </location>
    <ligand>
        <name>acetyl-CoA</name>
        <dbReference type="ChEBI" id="CHEBI:57288"/>
    </ligand>
</feature>
<feature type="binding site" evidence="1">
    <location>
        <position position="439"/>
    </location>
    <ligand>
        <name>acetyl-CoA</name>
        <dbReference type="ChEBI" id="CHEBI:57288"/>
    </ligand>
</feature>
<reference key="1">
    <citation type="journal article" date="2008" name="Genome Res.">
        <title>The genome of Pelotomaculum thermopropionicum reveals niche-associated evolution in anaerobic microbiota.</title>
        <authorList>
            <person name="Kosaka T."/>
            <person name="Kato S."/>
            <person name="Shimoyama T."/>
            <person name="Ishii S."/>
            <person name="Abe T."/>
            <person name="Watanabe K."/>
        </authorList>
    </citation>
    <scope>NUCLEOTIDE SEQUENCE [LARGE SCALE GENOMIC DNA]</scope>
    <source>
        <strain>DSM 13744 / JCM 10971 / SI</strain>
    </source>
</reference>
<accession>A5D662</accession>
<name>GLMU_PELTS</name>
<proteinExistence type="inferred from homology"/>
<dbReference type="EC" id="2.7.7.23" evidence="1"/>
<dbReference type="EC" id="2.3.1.157" evidence="1"/>
<dbReference type="EMBL" id="AP009389">
    <property type="protein sequence ID" value="BAF58285.1"/>
    <property type="molecule type" value="Genomic_DNA"/>
</dbReference>
<dbReference type="SMR" id="A5D662"/>
<dbReference type="STRING" id="370438.PTH_0104"/>
<dbReference type="KEGG" id="pth:PTH_0104"/>
<dbReference type="eggNOG" id="COG1207">
    <property type="taxonomic scope" value="Bacteria"/>
</dbReference>
<dbReference type="HOGENOM" id="CLU_029499_15_2_9"/>
<dbReference type="UniPathway" id="UPA00113">
    <property type="reaction ID" value="UER00532"/>
</dbReference>
<dbReference type="UniPathway" id="UPA00113">
    <property type="reaction ID" value="UER00533"/>
</dbReference>
<dbReference type="UniPathway" id="UPA00973"/>
<dbReference type="Proteomes" id="UP000006556">
    <property type="component" value="Chromosome"/>
</dbReference>
<dbReference type="GO" id="GO:0005737">
    <property type="term" value="C:cytoplasm"/>
    <property type="evidence" value="ECO:0007669"/>
    <property type="project" value="UniProtKB-SubCell"/>
</dbReference>
<dbReference type="GO" id="GO:0016020">
    <property type="term" value="C:membrane"/>
    <property type="evidence" value="ECO:0007669"/>
    <property type="project" value="GOC"/>
</dbReference>
<dbReference type="GO" id="GO:0019134">
    <property type="term" value="F:glucosamine-1-phosphate N-acetyltransferase activity"/>
    <property type="evidence" value="ECO:0007669"/>
    <property type="project" value="UniProtKB-UniRule"/>
</dbReference>
<dbReference type="GO" id="GO:0000287">
    <property type="term" value="F:magnesium ion binding"/>
    <property type="evidence" value="ECO:0007669"/>
    <property type="project" value="UniProtKB-UniRule"/>
</dbReference>
<dbReference type="GO" id="GO:0003977">
    <property type="term" value="F:UDP-N-acetylglucosamine diphosphorylase activity"/>
    <property type="evidence" value="ECO:0007669"/>
    <property type="project" value="UniProtKB-UniRule"/>
</dbReference>
<dbReference type="GO" id="GO:0000902">
    <property type="term" value="P:cell morphogenesis"/>
    <property type="evidence" value="ECO:0007669"/>
    <property type="project" value="UniProtKB-UniRule"/>
</dbReference>
<dbReference type="GO" id="GO:0071555">
    <property type="term" value="P:cell wall organization"/>
    <property type="evidence" value="ECO:0007669"/>
    <property type="project" value="UniProtKB-KW"/>
</dbReference>
<dbReference type="GO" id="GO:0009245">
    <property type="term" value="P:lipid A biosynthetic process"/>
    <property type="evidence" value="ECO:0007669"/>
    <property type="project" value="UniProtKB-UniRule"/>
</dbReference>
<dbReference type="GO" id="GO:0009252">
    <property type="term" value="P:peptidoglycan biosynthetic process"/>
    <property type="evidence" value="ECO:0007669"/>
    <property type="project" value="UniProtKB-UniRule"/>
</dbReference>
<dbReference type="GO" id="GO:0008360">
    <property type="term" value="P:regulation of cell shape"/>
    <property type="evidence" value="ECO:0007669"/>
    <property type="project" value="UniProtKB-KW"/>
</dbReference>
<dbReference type="GO" id="GO:0006048">
    <property type="term" value="P:UDP-N-acetylglucosamine biosynthetic process"/>
    <property type="evidence" value="ECO:0007669"/>
    <property type="project" value="UniProtKB-UniPathway"/>
</dbReference>
<dbReference type="CDD" id="cd02540">
    <property type="entry name" value="GT2_GlmU_N_bac"/>
    <property type="match status" value="1"/>
</dbReference>
<dbReference type="CDD" id="cd03353">
    <property type="entry name" value="LbH_GlmU_C"/>
    <property type="match status" value="1"/>
</dbReference>
<dbReference type="Gene3D" id="2.160.10.10">
    <property type="entry name" value="Hexapeptide repeat proteins"/>
    <property type="match status" value="1"/>
</dbReference>
<dbReference type="Gene3D" id="3.90.550.10">
    <property type="entry name" value="Spore Coat Polysaccharide Biosynthesis Protein SpsA, Chain A"/>
    <property type="match status" value="1"/>
</dbReference>
<dbReference type="HAMAP" id="MF_01631">
    <property type="entry name" value="GlmU"/>
    <property type="match status" value="1"/>
</dbReference>
<dbReference type="InterPro" id="IPR005882">
    <property type="entry name" value="Bifunctional_GlmU"/>
</dbReference>
<dbReference type="InterPro" id="IPR050065">
    <property type="entry name" value="GlmU-like"/>
</dbReference>
<dbReference type="InterPro" id="IPR038009">
    <property type="entry name" value="GlmU_C_LbH"/>
</dbReference>
<dbReference type="InterPro" id="IPR001451">
    <property type="entry name" value="Hexapep"/>
</dbReference>
<dbReference type="InterPro" id="IPR005835">
    <property type="entry name" value="NTP_transferase_dom"/>
</dbReference>
<dbReference type="InterPro" id="IPR029044">
    <property type="entry name" value="Nucleotide-diphossugar_trans"/>
</dbReference>
<dbReference type="InterPro" id="IPR011004">
    <property type="entry name" value="Trimer_LpxA-like_sf"/>
</dbReference>
<dbReference type="NCBIfam" id="TIGR01173">
    <property type="entry name" value="glmU"/>
    <property type="match status" value="1"/>
</dbReference>
<dbReference type="NCBIfam" id="NF010934">
    <property type="entry name" value="PRK14354.1"/>
    <property type="match status" value="1"/>
</dbReference>
<dbReference type="PANTHER" id="PTHR43584:SF3">
    <property type="entry name" value="BIFUNCTIONAL PROTEIN GLMU"/>
    <property type="match status" value="1"/>
</dbReference>
<dbReference type="PANTHER" id="PTHR43584">
    <property type="entry name" value="NUCLEOTIDYL TRANSFERASE"/>
    <property type="match status" value="1"/>
</dbReference>
<dbReference type="Pfam" id="PF00132">
    <property type="entry name" value="Hexapep"/>
    <property type="match status" value="3"/>
</dbReference>
<dbReference type="Pfam" id="PF00483">
    <property type="entry name" value="NTP_transferase"/>
    <property type="match status" value="1"/>
</dbReference>
<dbReference type="SUPFAM" id="SSF53448">
    <property type="entry name" value="Nucleotide-diphospho-sugar transferases"/>
    <property type="match status" value="1"/>
</dbReference>
<dbReference type="SUPFAM" id="SSF51161">
    <property type="entry name" value="Trimeric LpxA-like enzymes"/>
    <property type="match status" value="1"/>
</dbReference>
<organism>
    <name type="scientific">Pelotomaculum thermopropionicum (strain DSM 13744 / JCM 10971 / SI)</name>
    <dbReference type="NCBI Taxonomy" id="370438"/>
    <lineage>
        <taxon>Bacteria</taxon>
        <taxon>Bacillati</taxon>
        <taxon>Bacillota</taxon>
        <taxon>Clostridia</taxon>
        <taxon>Eubacteriales</taxon>
        <taxon>Desulfotomaculaceae</taxon>
        <taxon>Pelotomaculum</taxon>
    </lineage>
</organism>